<evidence type="ECO:0000250" key="1">
    <source>
        <dbReference type="UniProtKB" id="Q9BPX6"/>
    </source>
</evidence>
<evidence type="ECO:0000255" key="2"/>
<evidence type="ECO:0000255" key="3">
    <source>
        <dbReference type="PROSITE-ProRule" id="PRU00448"/>
    </source>
</evidence>
<evidence type="ECO:0000256" key="4">
    <source>
        <dbReference type="SAM" id="MobiDB-lite"/>
    </source>
</evidence>
<evidence type="ECO:0000303" key="5">
    <source ref="1"/>
</evidence>
<evidence type="ECO:0000305" key="6"/>
<accession>B1H2N3</accession>
<accession>Q28CG4</accession>
<proteinExistence type="evidence at transcript level"/>
<name>MICU1_XENTR</name>
<protein>
    <recommendedName>
        <fullName>Calcium uptake protein 1, mitochondrial</fullName>
    </recommendedName>
    <alternativeName>
        <fullName>Calcium-binding atopy-related autoantigen 1 homolog</fullName>
    </alternativeName>
</protein>
<dbReference type="EMBL" id="BC161065">
    <property type="protein sequence ID" value="AAI61065.1"/>
    <property type="status" value="ALT_FRAME"/>
    <property type="molecule type" value="mRNA"/>
</dbReference>
<dbReference type="EMBL" id="CR926402">
    <property type="protein sequence ID" value="CAJ83562.1"/>
    <property type="molecule type" value="mRNA"/>
</dbReference>
<dbReference type="RefSeq" id="NP_001106411.2">
    <molecule id="B1H2N3-1"/>
    <property type="nucleotide sequence ID" value="NM_001112940.2"/>
</dbReference>
<dbReference type="RefSeq" id="XP_017950727.1">
    <molecule id="B1H2N3-1"/>
    <property type="nucleotide sequence ID" value="XM_018095238.2"/>
</dbReference>
<dbReference type="SMR" id="B1H2N3"/>
<dbReference type="FunCoup" id="B1H2N3">
    <property type="interactions" value="1491"/>
</dbReference>
<dbReference type="STRING" id="8364.ENSXETP00000015980"/>
<dbReference type="PaxDb" id="8364-ENSXETP00000016304"/>
<dbReference type="DNASU" id="100127574"/>
<dbReference type="GeneID" id="100127574"/>
<dbReference type="KEGG" id="xtr:100127574"/>
<dbReference type="AGR" id="Xenbase:XB-GENE-953464"/>
<dbReference type="CTD" id="10367"/>
<dbReference type="Xenbase" id="XB-GENE-953464">
    <property type="gene designation" value="micu1"/>
</dbReference>
<dbReference type="eggNOG" id="KOG2643">
    <property type="taxonomic scope" value="Eukaryota"/>
</dbReference>
<dbReference type="InParanoid" id="B1H2N3"/>
<dbReference type="OrthoDB" id="10056860at2759"/>
<dbReference type="Reactome" id="R-XTR-8949215">
    <property type="pathway name" value="Mitochondrial calcium ion transport"/>
</dbReference>
<dbReference type="Proteomes" id="UP000008143">
    <property type="component" value="Chromosome 7"/>
</dbReference>
<dbReference type="Bgee" id="ENSXETG00000007480">
    <property type="expression patterns" value="Expressed in skeletal muscle tissue and 13 other cell types or tissues"/>
</dbReference>
<dbReference type="GO" id="GO:0005743">
    <property type="term" value="C:mitochondrial inner membrane"/>
    <property type="evidence" value="ECO:0000250"/>
    <property type="project" value="UniProtKB"/>
</dbReference>
<dbReference type="GO" id="GO:0005758">
    <property type="term" value="C:mitochondrial intermembrane space"/>
    <property type="evidence" value="ECO:0000250"/>
    <property type="project" value="UniProtKB"/>
</dbReference>
<dbReference type="GO" id="GO:0031966">
    <property type="term" value="C:mitochondrial membrane"/>
    <property type="evidence" value="ECO:0000250"/>
    <property type="project" value="UniProtKB"/>
</dbReference>
<dbReference type="GO" id="GO:1990246">
    <property type="term" value="C:uniplex complex"/>
    <property type="evidence" value="ECO:0000250"/>
    <property type="project" value="UniProtKB"/>
</dbReference>
<dbReference type="GO" id="GO:0005509">
    <property type="term" value="F:calcium ion binding"/>
    <property type="evidence" value="ECO:0000250"/>
    <property type="project" value="UniProtKB"/>
</dbReference>
<dbReference type="GO" id="GO:0061891">
    <property type="term" value="F:calcium ion sensor activity"/>
    <property type="evidence" value="ECO:0000250"/>
    <property type="project" value="UniProtKB"/>
</dbReference>
<dbReference type="GO" id="GO:0036444">
    <property type="term" value="P:calcium import into the mitochondrion"/>
    <property type="evidence" value="ECO:0007669"/>
    <property type="project" value="UniProtKB-ARBA"/>
</dbReference>
<dbReference type="GO" id="GO:0070509">
    <property type="term" value="P:calcium ion import"/>
    <property type="evidence" value="ECO:0000250"/>
    <property type="project" value="UniProtKB"/>
</dbReference>
<dbReference type="GO" id="GO:0051560">
    <property type="term" value="P:mitochondrial calcium ion homeostasis"/>
    <property type="evidence" value="ECO:0000250"/>
    <property type="project" value="UniProtKB"/>
</dbReference>
<dbReference type="GO" id="GO:0006851">
    <property type="term" value="P:mitochondrial calcium ion transmembrane transport"/>
    <property type="evidence" value="ECO:0000250"/>
    <property type="project" value="UniProtKB"/>
</dbReference>
<dbReference type="GO" id="GO:1903852">
    <property type="term" value="P:positive regulation of cristae formation"/>
    <property type="evidence" value="ECO:0000250"/>
    <property type="project" value="UniProtKB"/>
</dbReference>
<dbReference type="GO" id="GO:0051561">
    <property type="term" value="P:positive regulation of mitochondrial calcium ion concentration"/>
    <property type="evidence" value="ECO:0000250"/>
    <property type="project" value="UniProtKB"/>
</dbReference>
<dbReference type="CDD" id="cd16173">
    <property type="entry name" value="EFh_MICU1"/>
    <property type="match status" value="1"/>
</dbReference>
<dbReference type="FunFam" id="1.10.238.10:FF:000088">
    <property type="entry name" value="Calcium uptake protein 1, mitochondrial"/>
    <property type="match status" value="1"/>
</dbReference>
<dbReference type="FunFam" id="1.10.238.10:FF:000159">
    <property type="entry name" value="Calcium uptake protein 1, mitochondrial"/>
    <property type="match status" value="1"/>
</dbReference>
<dbReference type="Gene3D" id="1.10.238.10">
    <property type="entry name" value="EF-hand"/>
    <property type="match status" value="2"/>
</dbReference>
<dbReference type="InterPro" id="IPR011992">
    <property type="entry name" value="EF-hand-dom_pair"/>
</dbReference>
<dbReference type="InterPro" id="IPR018247">
    <property type="entry name" value="EF_Hand_1_Ca_BS"/>
</dbReference>
<dbReference type="InterPro" id="IPR002048">
    <property type="entry name" value="EF_hand_dom"/>
</dbReference>
<dbReference type="InterPro" id="IPR039800">
    <property type="entry name" value="MICU1/2/3"/>
</dbReference>
<dbReference type="PANTHER" id="PTHR12294:SF1">
    <property type="entry name" value="CALCIUM UPTAKE PROTEIN 1, MITOCHONDRIAL"/>
    <property type="match status" value="1"/>
</dbReference>
<dbReference type="PANTHER" id="PTHR12294">
    <property type="entry name" value="EF HAND DOMAIN FAMILY A1,A2-RELATED"/>
    <property type="match status" value="1"/>
</dbReference>
<dbReference type="Pfam" id="PF13202">
    <property type="entry name" value="EF-hand_5"/>
    <property type="match status" value="1"/>
</dbReference>
<dbReference type="Pfam" id="PF13833">
    <property type="entry name" value="EF-hand_8"/>
    <property type="match status" value="1"/>
</dbReference>
<dbReference type="SMART" id="SM00054">
    <property type="entry name" value="EFh"/>
    <property type="match status" value="2"/>
</dbReference>
<dbReference type="SUPFAM" id="SSF47473">
    <property type="entry name" value="EF-hand"/>
    <property type="match status" value="1"/>
</dbReference>
<dbReference type="PROSITE" id="PS00018">
    <property type="entry name" value="EF_HAND_1"/>
    <property type="match status" value="2"/>
</dbReference>
<dbReference type="PROSITE" id="PS50222">
    <property type="entry name" value="EF_HAND_2"/>
    <property type="match status" value="2"/>
</dbReference>
<organism>
    <name type="scientific">Xenopus tropicalis</name>
    <name type="common">Western clawed frog</name>
    <name type="synonym">Silurana tropicalis</name>
    <dbReference type="NCBI Taxonomy" id="8364"/>
    <lineage>
        <taxon>Eukaryota</taxon>
        <taxon>Metazoa</taxon>
        <taxon>Chordata</taxon>
        <taxon>Craniata</taxon>
        <taxon>Vertebrata</taxon>
        <taxon>Euteleostomi</taxon>
        <taxon>Amphibia</taxon>
        <taxon>Batrachia</taxon>
        <taxon>Anura</taxon>
        <taxon>Pipoidea</taxon>
        <taxon>Pipidae</taxon>
        <taxon>Xenopodinae</taxon>
        <taxon>Xenopus</taxon>
        <taxon>Silurana</taxon>
    </lineage>
</organism>
<reference key="1">
    <citation type="submission" date="2008-03" db="EMBL/GenBank/DDBJ databases">
        <authorList>
            <consortium name="NIH - Xenopus Gene Collection (XGC) project"/>
        </authorList>
    </citation>
    <scope>NUCLEOTIDE SEQUENCE [LARGE SCALE MRNA] (ISOFORM 2)</scope>
    <source>
        <tissue>Brain</tissue>
    </source>
</reference>
<reference key="2">
    <citation type="submission" date="2006-10" db="EMBL/GenBank/DDBJ databases">
        <authorList>
            <consortium name="Sanger Xenopus tropicalis EST/cDNA project"/>
        </authorList>
    </citation>
    <scope>NUCLEOTIDE SEQUENCE [LARGE SCALE MRNA] OF 155-473 (ISOFORM 1)</scope>
    <source>
        <tissue>Gastrula</tissue>
    </source>
</reference>
<keyword id="KW-0025">Alternative splicing</keyword>
<keyword id="KW-0106">Calcium</keyword>
<keyword id="KW-0109">Calcium transport</keyword>
<keyword id="KW-1015">Disulfide bond</keyword>
<keyword id="KW-0406">Ion transport</keyword>
<keyword id="KW-0472">Membrane</keyword>
<keyword id="KW-0479">Metal-binding</keyword>
<keyword id="KW-0496">Mitochondrion</keyword>
<keyword id="KW-0999">Mitochondrion inner membrane</keyword>
<keyword id="KW-1185">Reference proteome</keyword>
<keyword id="KW-0677">Repeat</keyword>
<keyword id="KW-0809">Transit peptide</keyword>
<keyword id="KW-0813">Transport</keyword>
<comment type="function">
    <text evidence="1">Calcium sensor of the mitochondrial calcium uniporter (mcu) channel, which senses calcium level via its EF-hand domains (By similarity). micu1 and micu2 form a disulfide-linked heterodimer that stimulates and inhibits MCU activity, depending on the concentration of calcium (By similarity). At low calcium levels, micu1 occludes the pore of the MCU channel, preventing mitochondrial calcium uptake (By similarity). At higher calcium levels, calcium-binding to micu1 and micu2 induces a conformational change that weakens mcu-micu1 interactions and moves the micu1-micu2 heterodimer away from the pore, allowing calcium permeation through the mcu channel (By similarity). Also required to protect against manganese toxicity by preventing manganese uptake by mcu (By similarity).</text>
</comment>
<comment type="subunit">
    <text evidence="1">Heterodimer; disulfide-linked; heterodimerizes with micu2 (By similarity). Component of the uniplex complex (By similarity).</text>
</comment>
<comment type="subcellular location">
    <subcellularLocation>
        <location evidence="1">Mitochondrion intermembrane space</location>
    </subcellularLocation>
    <subcellularLocation>
        <location evidence="1">Mitochondrion inner membrane</location>
    </subcellularLocation>
    <text evidence="1">Recruited to the mitochondrial inner membrane by EMRE/SMDT1. Also localizes to mitochondrial cristae junctions.</text>
</comment>
<comment type="alternative products">
    <event type="alternative splicing"/>
    <isoform>
        <id>B1H2N3-1</id>
        <name>1</name>
        <sequence type="displayed"/>
    </isoform>
    <isoform>
        <id>B1H2N3-2</id>
        <name>2</name>
        <sequence type="described" ref="VSP_039908"/>
    </isoform>
</comment>
<comment type="domain">
    <text evidence="1">The EF-hand domains have high affinity for calcium and act as sensors of calcium levels.</text>
</comment>
<comment type="domain">
    <text evidence="1">Lysine and arginine residues in the K/R-ring mediate electrostatic interactions with mcu and play a key role in mcu inhibition in absence of calcium.</text>
</comment>
<comment type="domain">
    <text evidence="1">The C-helix plays a key role in mitochondrial calcium uptake, probably by mediating interaction with micu2.</text>
</comment>
<comment type="similarity">
    <text evidence="6">Belongs to the MICU1 family. MICU1 subfamily.</text>
</comment>
<comment type="sequence caution" evidence="6">
    <conflict type="frameshift">
        <sequence resource="EMBL-CDS" id="AAI61065"/>
    </conflict>
</comment>
<gene>
    <name type="primary">micu1</name>
    <name type="synonym">cbara1</name>
    <name type="ORF">TGas034p18.1</name>
</gene>
<feature type="transit peptide" description="Mitochondrion" evidence="1 2">
    <location>
        <begin position="1"/>
        <end position="33"/>
    </location>
</feature>
<feature type="chain" id="PRO_0000399809" description="Calcium uptake protein 1, mitochondrial">
    <location>
        <begin position="34"/>
        <end position="473"/>
    </location>
</feature>
<feature type="domain" description="EF-hand 1" evidence="3">
    <location>
        <begin position="215"/>
        <end position="250"/>
    </location>
</feature>
<feature type="domain" description="EF-hand 2" evidence="3">
    <location>
        <begin position="405"/>
        <end position="440"/>
    </location>
</feature>
<feature type="region of interest" description="Disordered" evidence="4">
    <location>
        <begin position="61"/>
        <end position="101"/>
    </location>
</feature>
<feature type="region of interest" description="Polybasic region" evidence="1">
    <location>
        <begin position="96"/>
        <end position="107"/>
    </location>
</feature>
<feature type="region of interest" description="K/R-ring" evidence="1">
    <location>
        <begin position="123"/>
        <end position="126"/>
    </location>
</feature>
<feature type="region of interest" description="K/R-ring" evidence="1">
    <location>
        <begin position="256"/>
        <end position="260"/>
    </location>
</feature>
<feature type="region of interest" description="C-helix region" evidence="1">
    <location>
        <begin position="452"/>
        <end position="462"/>
    </location>
</feature>
<feature type="compositionally biased region" description="Basic and acidic residues" evidence="4">
    <location>
        <begin position="66"/>
        <end position="79"/>
    </location>
</feature>
<feature type="compositionally biased region" description="Acidic residues" evidence="4">
    <location>
        <begin position="80"/>
        <end position="91"/>
    </location>
</feature>
<feature type="binding site" evidence="3">
    <location>
        <position position="228"/>
    </location>
    <ligand>
        <name>Ca(2+)</name>
        <dbReference type="ChEBI" id="CHEBI:29108"/>
        <label>1</label>
    </ligand>
</feature>
<feature type="binding site" evidence="3">
    <location>
        <position position="230"/>
    </location>
    <ligand>
        <name>Ca(2+)</name>
        <dbReference type="ChEBI" id="CHEBI:29108"/>
        <label>1</label>
    </ligand>
</feature>
<feature type="binding site" evidence="3">
    <location>
        <position position="232"/>
    </location>
    <ligand>
        <name>Ca(2+)</name>
        <dbReference type="ChEBI" id="CHEBI:29108"/>
        <label>1</label>
    </ligand>
</feature>
<feature type="binding site" evidence="3">
    <location>
        <position position="234"/>
    </location>
    <ligand>
        <name>Ca(2+)</name>
        <dbReference type="ChEBI" id="CHEBI:29108"/>
        <label>1</label>
    </ligand>
</feature>
<feature type="binding site" evidence="3">
    <location>
        <position position="239"/>
    </location>
    <ligand>
        <name>Ca(2+)</name>
        <dbReference type="ChEBI" id="CHEBI:29108"/>
        <label>1</label>
    </ligand>
</feature>
<feature type="binding site" evidence="3">
    <location>
        <position position="418"/>
    </location>
    <ligand>
        <name>Ca(2+)</name>
        <dbReference type="ChEBI" id="CHEBI:29108"/>
        <label>2</label>
    </ligand>
</feature>
<feature type="binding site" evidence="3">
    <location>
        <position position="420"/>
    </location>
    <ligand>
        <name>Ca(2+)</name>
        <dbReference type="ChEBI" id="CHEBI:29108"/>
        <label>2</label>
    </ligand>
</feature>
<feature type="binding site" evidence="3">
    <location>
        <position position="422"/>
    </location>
    <ligand>
        <name>Ca(2+)</name>
        <dbReference type="ChEBI" id="CHEBI:29108"/>
        <label>2</label>
    </ligand>
</feature>
<feature type="binding site" evidence="3">
    <location>
        <position position="424"/>
    </location>
    <ligand>
        <name>Ca(2+)</name>
        <dbReference type="ChEBI" id="CHEBI:29108"/>
        <label>2</label>
    </ligand>
</feature>
<feature type="binding site" evidence="3">
    <location>
        <position position="429"/>
    </location>
    <ligand>
        <name>Ca(2+)</name>
        <dbReference type="ChEBI" id="CHEBI:29108"/>
        <label>2</label>
    </ligand>
</feature>
<feature type="disulfide bond" description="Interchain (with C-413 in micu2)" evidence="1">
    <location>
        <position position="460"/>
    </location>
</feature>
<feature type="splice variant" id="VSP_039908" description="In isoform 2." evidence="5">
    <original>K</original>
    <variation>KTE</variation>
    <location>
        <position position="176"/>
    </location>
</feature>
<sequence>MFRLRFIPAVAGLAAVSRRYHGVANHARSRRRLMMAAFVGATAVSASAGLLWKRANAEAQSSVKHSMREETSEKEKEDADQAVESSDEDQPQEGKKKKARVGFRDRKVMEYENRIRAYSTPDKIFRYFATLKVIHESGESEVFMTPQDFVRSITPNEKQPENLGLDQFIIKRYDGKKISQEREKFADEDSIFYSLGECGLISFSDYIFLTTVLSTPQRNFEIAFKMFDLNGDGEVDMEEFEQVQSIIRSQTSMGMRHRDRSTTGNTLKTGFSSALTTYFFGADLKGKLTIKNFLEFQRKLQHDVLKLEFERHDPVDGHITERQFGSMLLAYSGVQSKKLTHMLKQLKKRFKDAEGLTFEEVENFFTFLKNINDVDTALSFYHMAGASLDKVTMQQVARTVAKVELSDHVCDVVFALFDCDGNGELSNKEFIAIMKQRLMRGLEKPKDMGFTRLMRAMWKCAQETAWDFAMPKQ</sequence>